<gene>
    <name evidence="1" type="primary">rpoA</name>
    <name type="ordered locus">RAF_ORF0888</name>
</gene>
<evidence type="ECO:0000255" key="1">
    <source>
        <dbReference type="HAMAP-Rule" id="MF_00059"/>
    </source>
</evidence>
<sequence>MLSLSKNWNTLIKPNKVAYENFPETNNKAKIVVEPLERGFGLTLGNAMRRVLLSSLQGAAITSIKIPAIEHEFSSIPGVKEDVSEVILNIKGIEVKMHVAEKRIMKLKATGPCVVTAGMIETGHDVEILNPDHVICDLAKDKQLEMELTCKVGKGYVLSTNSYEDNLPIGEIAIDALFNPVKSVTYKVENTRVGQVTDYDKLIMFVETNGDVLPEMAVGLAARILQEQLQLFISFEEQEEDKQVKTDALLFSPYLLKRVDELELSVRSANCLKNDNIIYIGDLVKRTESDMLRTPNFGRKSLNEIKEILAKFNLRFGMDVPDWPPENIQELSKRYEDSYN</sequence>
<keyword id="KW-0240">DNA-directed RNA polymerase</keyword>
<keyword id="KW-0548">Nucleotidyltransferase</keyword>
<keyword id="KW-0804">Transcription</keyword>
<keyword id="KW-0808">Transferase</keyword>
<organism>
    <name type="scientific">Rickettsia africae (strain ESF-5)</name>
    <dbReference type="NCBI Taxonomy" id="347255"/>
    <lineage>
        <taxon>Bacteria</taxon>
        <taxon>Pseudomonadati</taxon>
        <taxon>Pseudomonadota</taxon>
        <taxon>Alphaproteobacteria</taxon>
        <taxon>Rickettsiales</taxon>
        <taxon>Rickettsiaceae</taxon>
        <taxon>Rickettsieae</taxon>
        <taxon>Rickettsia</taxon>
        <taxon>spotted fever group</taxon>
    </lineage>
</organism>
<reference key="1">
    <citation type="journal article" date="2009" name="BMC Genomics">
        <title>Analysis of the Rickettsia africae genome reveals that virulence acquisition in Rickettsia species may be explained by genome reduction.</title>
        <authorList>
            <person name="Fournier P.-E."/>
            <person name="El Karkouri K."/>
            <person name="Leroy Q."/>
            <person name="Robert C."/>
            <person name="Giumelli B."/>
            <person name="Renesto P."/>
            <person name="Socolovschi C."/>
            <person name="Parola P."/>
            <person name="Audic S."/>
            <person name="Raoult D."/>
        </authorList>
    </citation>
    <scope>NUCLEOTIDE SEQUENCE [LARGE SCALE GENOMIC DNA]</scope>
    <source>
        <strain>ESF-5</strain>
    </source>
</reference>
<name>RPOA_RICAE</name>
<accession>C3PP83</accession>
<dbReference type="EC" id="2.7.7.6" evidence="1"/>
<dbReference type="EMBL" id="CP001612">
    <property type="protein sequence ID" value="ACP53743.1"/>
    <property type="molecule type" value="Genomic_DNA"/>
</dbReference>
<dbReference type="RefSeq" id="WP_012719913.1">
    <property type="nucleotide sequence ID" value="NC_012633.1"/>
</dbReference>
<dbReference type="SMR" id="C3PP83"/>
<dbReference type="KEGG" id="raf:RAF_ORF0888"/>
<dbReference type="HOGENOM" id="CLU_053084_0_0_5"/>
<dbReference type="Proteomes" id="UP000002305">
    <property type="component" value="Chromosome"/>
</dbReference>
<dbReference type="GO" id="GO:0005737">
    <property type="term" value="C:cytoplasm"/>
    <property type="evidence" value="ECO:0007669"/>
    <property type="project" value="UniProtKB-ARBA"/>
</dbReference>
<dbReference type="GO" id="GO:0000428">
    <property type="term" value="C:DNA-directed RNA polymerase complex"/>
    <property type="evidence" value="ECO:0007669"/>
    <property type="project" value="UniProtKB-KW"/>
</dbReference>
<dbReference type="GO" id="GO:0003677">
    <property type="term" value="F:DNA binding"/>
    <property type="evidence" value="ECO:0007669"/>
    <property type="project" value="UniProtKB-UniRule"/>
</dbReference>
<dbReference type="GO" id="GO:0003899">
    <property type="term" value="F:DNA-directed RNA polymerase activity"/>
    <property type="evidence" value="ECO:0007669"/>
    <property type="project" value="UniProtKB-UniRule"/>
</dbReference>
<dbReference type="GO" id="GO:0046983">
    <property type="term" value="F:protein dimerization activity"/>
    <property type="evidence" value="ECO:0007669"/>
    <property type="project" value="InterPro"/>
</dbReference>
<dbReference type="GO" id="GO:0006351">
    <property type="term" value="P:DNA-templated transcription"/>
    <property type="evidence" value="ECO:0007669"/>
    <property type="project" value="UniProtKB-UniRule"/>
</dbReference>
<dbReference type="CDD" id="cd06928">
    <property type="entry name" value="RNAP_alpha_NTD"/>
    <property type="match status" value="1"/>
</dbReference>
<dbReference type="FunFam" id="1.10.150.20:FF:000001">
    <property type="entry name" value="DNA-directed RNA polymerase subunit alpha"/>
    <property type="match status" value="1"/>
</dbReference>
<dbReference type="FunFam" id="2.170.120.12:FF:000001">
    <property type="entry name" value="DNA-directed RNA polymerase subunit alpha"/>
    <property type="match status" value="1"/>
</dbReference>
<dbReference type="Gene3D" id="1.10.150.20">
    <property type="entry name" value="5' to 3' exonuclease, C-terminal subdomain"/>
    <property type="match status" value="1"/>
</dbReference>
<dbReference type="Gene3D" id="2.170.120.12">
    <property type="entry name" value="DNA-directed RNA polymerase, insert domain"/>
    <property type="match status" value="1"/>
</dbReference>
<dbReference type="Gene3D" id="3.30.1360.10">
    <property type="entry name" value="RNA polymerase, RBP11-like subunit"/>
    <property type="match status" value="1"/>
</dbReference>
<dbReference type="HAMAP" id="MF_00059">
    <property type="entry name" value="RNApol_bact_RpoA"/>
    <property type="match status" value="1"/>
</dbReference>
<dbReference type="InterPro" id="IPR011262">
    <property type="entry name" value="DNA-dir_RNA_pol_insert"/>
</dbReference>
<dbReference type="InterPro" id="IPR011263">
    <property type="entry name" value="DNA-dir_RNA_pol_RpoA/D/Rpb3"/>
</dbReference>
<dbReference type="InterPro" id="IPR011773">
    <property type="entry name" value="DNA-dir_RpoA"/>
</dbReference>
<dbReference type="InterPro" id="IPR036603">
    <property type="entry name" value="RBP11-like"/>
</dbReference>
<dbReference type="InterPro" id="IPR011260">
    <property type="entry name" value="RNAP_asu_C"/>
</dbReference>
<dbReference type="InterPro" id="IPR036643">
    <property type="entry name" value="RNApol_insert_sf"/>
</dbReference>
<dbReference type="NCBIfam" id="NF003513">
    <property type="entry name" value="PRK05182.1-2"/>
    <property type="match status" value="1"/>
</dbReference>
<dbReference type="NCBIfam" id="NF003519">
    <property type="entry name" value="PRK05182.2-5"/>
    <property type="match status" value="1"/>
</dbReference>
<dbReference type="NCBIfam" id="TIGR02027">
    <property type="entry name" value="rpoA"/>
    <property type="match status" value="1"/>
</dbReference>
<dbReference type="Pfam" id="PF01000">
    <property type="entry name" value="RNA_pol_A_bac"/>
    <property type="match status" value="1"/>
</dbReference>
<dbReference type="Pfam" id="PF03118">
    <property type="entry name" value="RNA_pol_A_CTD"/>
    <property type="match status" value="1"/>
</dbReference>
<dbReference type="Pfam" id="PF01193">
    <property type="entry name" value="RNA_pol_L"/>
    <property type="match status" value="1"/>
</dbReference>
<dbReference type="SMART" id="SM00662">
    <property type="entry name" value="RPOLD"/>
    <property type="match status" value="1"/>
</dbReference>
<dbReference type="SUPFAM" id="SSF47789">
    <property type="entry name" value="C-terminal domain of RNA polymerase alpha subunit"/>
    <property type="match status" value="1"/>
</dbReference>
<dbReference type="SUPFAM" id="SSF56553">
    <property type="entry name" value="Insert subdomain of RNA polymerase alpha subunit"/>
    <property type="match status" value="1"/>
</dbReference>
<dbReference type="SUPFAM" id="SSF55257">
    <property type="entry name" value="RBP11-like subunits of RNA polymerase"/>
    <property type="match status" value="1"/>
</dbReference>
<protein>
    <recommendedName>
        <fullName evidence="1">DNA-directed RNA polymerase subunit alpha</fullName>
        <shortName evidence="1">RNAP subunit alpha</shortName>
        <ecNumber evidence="1">2.7.7.6</ecNumber>
    </recommendedName>
    <alternativeName>
        <fullName evidence="1">RNA polymerase subunit alpha</fullName>
    </alternativeName>
    <alternativeName>
        <fullName evidence="1">Transcriptase subunit alpha</fullName>
    </alternativeName>
</protein>
<proteinExistence type="inferred from homology"/>
<comment type="function">
    <text evidence="1">DNA-dependent RNA polymerase catalyzes the transcription of DNA into RNA using the four ribonucleoside triphosphates as substrates.</text>
</comment>
<comment type="catalytic activity">
    <reaction evidence="1">
        <text>RNA(n) + a ribonucleoside 5'-triphosphate = RNA(n+1) + diphosphate</text>
        <dbReference type="Rhea" id="RHEA:21248"/>
        <dbReference type="Rhea" id="RHEA-COMP:14527"/>
        <dbReference type="Rhea" id="RHEA-COMP:17342"/>
        <dbReference type="ChEBI" id="CHEBI:33019"/>
        <dbReference type="ChEBI" id="CHEBI:61557"/>
        <dbReference type="ChEBI" id="CHEBI:140395"/>
        <dbReference type="EC" id="2.7.7.6"/>
    </reaction>
</comment>
<comment type="subunit">
    <text evidence="1">Homodimer. The RNAP catalytic core consists of 2 alpha, 1 beta, 1 beta' and 1 omega subunit. When a sigma factor is associated with the core the holoenzyme is formed, which can initiate transcription.</text>
</comment>
<comment type="domain">
    <text evidence="1">The N-terminal domain is essential for RNAP assembly and basal transcription, whereas the C-terminal domain is involved in interaction with transcriptional regulators and with upstream promoter elements.</text>
</comment>
<comment type="similarity">
    <text evidence="1">Belongs to the RNA polymerase alpha chain family.</text>
</comment>
<feature type="chain" id="PRO_1000202358" description="DNA-directed RNA polymerase subunit alpha">
    <location>
        <begin position="1"/>
        <end position="340"/>
    </location>
</feature>
<feature type="region of interest" description="Alpha N-terminal domain (alpha-NTD)" evidence="1">
    <location>
        <begin position="1"/>
        <end position="236"/>
    </location>
</feature>
<feature type="region of interest" description="Alpha C-terminal domain (alpha-CTD)" evidence="1">
    <location>
        <begin position="251"/>
        <end position="340"/>
    </location>
</feature>